<feature type="chain" id="PRO_0000214787" description="Sodium- and chloride-dependent betaine transporter">
    <location>
        <begin position="1"/>
        <end position="614"/>
    </location>
</feature>
<feature type="topological domain" description="Cytoplasmic" evidence="4">
    <location>
        <begin position="1"/>
        <end position="44"/>
    </location>
</feature>
<feature type="transmembrane region" description="Helical; Name=1" evidence="4">
    <location>
        <begin position="45"/>
        <end position="65"/>
    </location>
</feature>
<feature type="transmembrane region" description="Helical; Name=2" evidence="4">
    <location>
        <begin position="73"/>
        <end position="92"/>
    </location>
</feature>
<feature type="transmembrane region" description="Helical; Name=3" evidence="4">
    <location>
        <begin position="117"/>
        <end position="137"/>
    </location>
</feature>
<feature type="topological domain" description="Extracellular" evidence="4">
    <location>
        <begin position="138"/>
        <end position="210"/>
    </location>
</feature>
<feature type="transmembrane region" description="Helical; Name=4" evidence="4">
    <location>
        <begin position="211"/>
        <end position="229"/>
    </location>
</feature>
<feature type="transmembrane region" description="Helical; Name=5" evidence="4">
    <location>
        <begin position="238"/>
        <end position="255"/>
    </location>
</feature>
<feature type="transmembrane region" description="Helical; Name=6" evidence="4">
    <location>
        <begin position="291"/>
        <end position="308"/>
    </location>
</feature>
<feature type="transmembrane region" description="Helical; Name=7" evidence="4">
    <location>
        <begin position="320"/>
        <end position="341"/>
    </location>
</feature>
<feature type="transmembrane region" description="Helical; Name=8" evidence="4">
    <location>
        <begin position="374"/>
        <end position="393"/>
    </location>
</feature>
<feature type="transmembrane region" description="Helical; Name=9" evidence="4">
    <location>
        <begin position="423"/>
        <end position="441"/>
    </location>
</feature>
<feature type="transmembrane region" description="Helical; Name=10" evidence="4">
    <location>
        <begin position="458"/>
        <end position="478"/>
    </location>
</feature>
<feature type="transmembrane region" description="Helical; Name=11" evidence="4">
    <location>
        <begin position="499"/>
        <end position="518"/>
    </location>
</feature>
<feature type="transmembrane region" description="Helical; Name=12" evidence="4">
    <location>
        <begin position="538"/>
        <end position="556"/>
    </location>
</feature>
<feature type="topological domain" description="Cytoplasmic" evidence="4">
    <location>
        <begin position="557"/>
        <end position="614"/>
    </location>
</feature>
<feature type="region of interest" description="Disordered" evidence="5">
    <location>
        <begin position="1"/>
        <end position="33"/>
    </location>
</feature>
<feature type="region of interest" description="Disordered" evidence="5">
    <location>
        <begin position="591"/>
        <end position="614"/>
    </location>
</feature>
<feature type="compositionally biased region" description="Basic and acidic residues" evidence="5">
    <location>
        <begin position="21"/>
        <end position="33"/>
    </location>
</feature>
<feature type="glycosylation site" description="N-linked (GlcNAc...) asparagine" evidence="4">
    <location>
        <position position="171"/>
    </location>
</feature>
<feature type="glycosylation site" description="N-linked (GlcNAc...) asparagine" evidence="4">
    <location>
        <position position="183"/>
    </location>
</feature>
<feature type="disulfide bond" evidence="3">
    <location>
        <begin position="157"/>
        <end position="166"/>
    </location>
</feature>
<protein>
    <recommendedName>
        <fullName>Sodium- and chloride-dependent betaine transporter</fullName>
    </recommendedName>
    <alternativeName>
        <fullName>Na(+)/Cl(-) betaine/GABA transporter</fullName>
    </alternativeName>
    <alternativeName>
        <fullName>Solute carrier family 6 member 12</fullName>
    </alternativeName>
</protein>
<gene>
    <name type="primary">SLC6A12</name>
</gene>
<evidence type="ECO:0000250" key="1">
    <source>
        <dbReference type="UniProtKB" id="P31651"/>
    </source>
</evidence>
<evidence type="ECO:0000250" key="2">
    <source>
        <dbReference type="UniProtKB" id="P48065"/>
    </source>
</evidence>
<evidence type="ECO:0000250" key="3">
    <source>
        <dbReference type="UniProtKB" id="Q7K4Y6"/>
    </source>
</evidence>
<evidence type="ECO:0000255" key="4"/>
<evidence type="ECO:0000256" key="5">
    <source>
        <dbReference type="SAM" id="MobiDB-lite"/>
    </source>
</evidence>
<evidence type="ECO:0000269" key="6">
    <source>
    </source>
</evidence>
<evidence type="ECO:0000269" key="7">
    <source>
    </source>
</evidence>
<evidence type="ECO:0000269" key="8">
    <source>
    </source>
</evidence>
<evidence type="ECO:0000305" key="9"/>
<evidence type="ECO:0000305" key="10">
    <source>
    </source>
</evidence>
<keyword id="KW-1003">Cell membrane</keyword>
<keyword id="KW-1015">Disulfide bond</keyword>
<keyword id="KW-0325">Glycoprotein</keyword>
<keyword id="KW-0472">Membrane</keyword>
<keyword id="KW-0532">Neurotransmitter transport</keyword>
<keyword id="KW-1185">Reference proteome</keyword>
<keyword id="KW-0769">Symport</keyword>
<keyword id="KW-0812">Transmembrane</keyword>
<keyword id="KW-1133">Transmembrane helix</keyword>
<keyword id="KW-0813">Transport</keyword>
<name>S6A12_CANLF</name>
<proteinExistence type="evidence at protein level"/>
<reference key="1">
    <citation type="journal article" date="1992" name="J. Biol. Chem.">
        <title>Cloning of a Na(+)- and Cl(-)-dependent betaine transporter that is regulated by hypertonicity.</title>
        <authorList>
            <person name="Yamauchi A."/>
            <person name="Uchida S."/>
            <person name="Kwon H.M."/>
            <person name="Preston A.S."/>
            <person name="Robey R.B."/>
            <person name="Garcia-Perez A."/>
            <person name="Burg M.B."/>
            <person name="Handler J.S."/>
        </authorList>
    </citation>
    <scope>NUCLEOTIDE SEQUENCE [MRNA]</scope>
    <scope>TISSUE SPECIFICITY</scope>
    <scope>TRANSPORTER ACTIVITY</scope>
    <source>
        <strain>Cocker spaniel</strain>
        <tissue>Kidney</tissue>
    </source>
</reference>
<reference key="2">
    <citation type="journal article" date="1995" name="Proc. Natl. Acad. Sci. U.S.A.">
        <title>The canine betaine gamma-amino-n-butyric acid transporter gene: diverse mRNA isoforms are regulated by hypertonicity and are expressed in a tissue-specific manner.</title>
        <authorList>
            <person name="Takenaka M."/>
            <person name="Bagnasco S.M."/>
            <person name="Preston A.S."/>
            <person name="Uchida S."/>
            <person name="Yamauchi A."/>
            <person name="Kwon H.M."/>
            <person name="Handler J.S."/>
        </authorList>
    </citation>
    <scope>NUCLEOTIDE SEQUENCE [GENOMIC DNA]</scope>
</reference>
<reference key="3">
    <citation type="journal article" date="1999" name="J. Biol. Chem.">
        <title>Functional characterization of the Betaine/gamma-aminobutyric acid transporter BGT-1 expressed in Xenopus oocytes.</title>
        <authorList>
            <person name="Matskevitch I."/>
            <person name="Wagner C.A."/>
            <person name="Stegen C."/>
            <person name="Broeer S."/>
            <person name="Noll B."/>
            <person name="Risler T."/>
            <person name="Kwon H.M."/>
            <person name="Handler J.S."/>
            <person name="Waldegger S."/>
            <person name="Busch A.E."/>
            <person name="Lang F."/>
        </authorList>
    </citation>
    <scope>FUNCTION</scope>
    <scope>TRANSPORTER ACTIVITY</scope>
</reference>
<reference key="4">
    <citation type="journal article" date="2000" name="Am. J. Physiol.">
        <title>mLin-7 is localized to the basolateral surface of renal epithelia via its NH(2) terminus.</title>
        <authorList>
            <person name="Straight S.W."/>
            <person name="Karnak D."/>
            <person name="Borg J.-P."/>
            <person name="Kamberov E."/>
            <person name="Dare H."/>
            <person name="Margolis B."/>
            <person name="Wade J.B."/>
        </authorList>
    </citation>
    <scope>INTERACTION WITH LIN7C</scope>
</reference>
<accession>P27799</accession>
<organism>
    <name type="scientific">Canis lupus familiaris</name>
    <name type="common">Dog</name>
    <name type="synonym">Canis familiaris</name>
    <dbReference type="NCBI Taxonomy" id="9615"/>
    <lineage>
        <taxon>Eukaryota</taxon>
        <taxon>Metazoa</taxon>
        <taxon>Chordata</taxon>
        <taxon>Craniata</taxon>
        <taxon>Vertebrata</taxon>
        <taxon>Euteleostomi</taxon>
        <taxon>Mammalia</taxon>
        <taxon>Eutheria</taxon>
        <taxon>Laurasiatheria</taxon>
        <taxon>Carnivora</taxon>
        <taxon>Caniformia</taxon>
        <taxon>Canidae</taxon>
        <taxon>Canis</taxon>
    </lineage>
</organism>
<sequence length="614" mass="69292">MDRKVAVPEDGPPVVSWLPEEGEKLDQEGEDQVKDRGQWTNKMEFVLSVAGEIIGLGNVWRFPYLCYKNGGGAFFIPYFIFFFTCGIPVFFLEVALGQYTSQGSVTAWRKICPLLQGIGLASVVIESYLNIYYIIILAWALFYLFSSFTSELPWTTCTNTWNTEHCMDFLNHSGARTATSSENFTSPVMEFWERRVLGITSGIHDLGALRWELALCLLLAWLICYFCIWKGVKTTGKVVYFTATFPYLMLVILLIRGITLPGAYQGVIYYLKPDLLRLKDPQVWMDAGTQIFFSFAICQGCLTALGSYNKYHNNCYRDSIALCFLNSATSFAAGFVVFSILGFMAQEQGLPISEVAESGPGLAFIAFPKAVTMMPLSQLWSCLFFIMLIFLGLDSQFVCVECLVTASMDMFPSQLRKSGRRELLILAIAVFCYLAGLFLVTEGGMYIFQLFDYYASSGICLLFLAMFEVICISWVYGADRFYDNIEDMIGYRPWPLVKISWLFLTPGLCLATFLFSLSQYTPLKYNNIYVYPPWGYSIGWFLALSSMICVPLFVIITLLKTRGSFKKRLRQLTTPDPSLPQPKQHLYLDGGTSQDCGPSPTKEGLIVGEKETHL</sequence>
<comment type="function">
    <text evidence="1 2 6">Transporter that mediates cellular uptake of betaine and GABA in a sodium- and chloride-dependent process (PubMed:10358010). May have a role in regulation of GABAergic transmission in the brain through the reuptake of GABA into presynaptic terminals, as well as in osmotic regulation (By similarity). Probably also involved in renal and hepatic osmotic regulation (By similarity).</text>
</comment>
<comment type="catalytic activity">
    <reaction evidence="6 8">
        <text>4-aminobutanoate(out) + chloride(out) + 3 Na(+)(out) = 4-aminobutanoate(in) + chloride(in) + 3 Na(+)(in)</text>
        <dbReference type="Rhea" id="RHEA:70731"/>
        <dbReference type="ChEBI" id="CHEBI:17996"/>
        <dbReference type="ChEBI" id="CHEBI:29101"/>
        <dbReference type="ChEBI" id="CHEBI:59888"/>
    </reaction>
    <physiologicalReaction direction="left-to-right" evidence="10">
        <dbReference type="Rhea" id="RHEA:70732"/>
    </physiologicalReaction>
</comment>
<comment type="catalytic activity">
    <reaction evidence="6 8">
        <text>glycine betaine(out) + 2 chloride(out) + 3 Na(+)(out) = glycine betaine(in) + 2 chloride(in) + 3 Na(+)(in)</text>
        <dbReference type="Rhea" id="RHEA:71175"/>
        <dbReference type="ChEBI" id="CHEBI:17750"/>
        <dbReference type="ChEBI" id="CHEBI:17996"/>
        <dbReference type="ChEBI" id="CHEBI:29101"/>
    </reaction>
    <physiologicalReaction direction="left-to-right" evidence="10">
        <dbReference type="Rhea" id="RHEA:71176"/>
    </physiologicalReaction>
</comment>
<comment type="subunit">
    <text evidence="7">Interacts with LIN7C.</text>
</comment>
<comment type="subcellular location">
    <subcellularLocation>
        <location evidence="1">Basolateral cell membrane</location>
        <topology evidence="4">Multi-pass membrane protein</topology>
    </subcellularLocation>
    <subcellularLocation>
        <location evidence="1">Cell membrane</location>
        <topology evidence="4">Multi-pass membrane protein</topology>
    </subcellularLocation>
    <text evidence="1">In kidney, locates in basolateral membranes of renal medulla. In liver, locates in hepatocytes cell membrane.</text>
</comment>
<comment type="tissue specificity">
    <text evidence="8">Kidney.</text>
</comment>
<comment type="similarity">
    <text evidence="9">Belongs to the sodium:neurotransmitter symporter (SNF) (TC 2.A.22) family. SLC6A12 subfamily.</text>
</comment>
<dbReference type="EMBL" id="M80403">
    <property type="protein sequence ID" value="AAA30877.1"/>
    <property type="molecule type" value="mRNA"/>
</dbReference>
<dbReference type="EMBL" id="D42037">
    <property type="protein sequence ID" value="BAA22547.1"/>
    <property type="molecule type" value="Genomic_DNA"/>
</dbReference>
<dbReference type="PIR" id="A41757">
    <property type="entry name" value="A41757"/>
</dbReference>
<dbReference type="RefSeq" id="NP_001003322.1">
    <property type="nucleotide sequence ID" value="NM_001003322.3"/>
</dbReference>
<dbReference type="RefSeq" id="XP_005636741.1">
    <property type="nucleotide sequence ID" value="XM_005636684.2"/>
</dbReference>
<dbReference type="RefSeq" id="XP_005636742.1">
    <property type="nucleotide sequence ID" value="XM_005636685.2"/>
</dbReference>
<dbReference type="RefSeq" id="XP_005636743.1">
    <property type="nucleotide sequence ID" value="XM_005636686.2"/>
</dbReference>
<dbReference type="RefSeq" id="XP_005636744.1">
    <property type="nucleotide sequence ID" value="XM_005636687.2"/>
</dbReference>
<dbReference type="RefSeq" id="XP_005636745.1">
    <property type="nucleotide sequence ID" value="XM_005636688.2"/>
</dbReference>
<dbReference type="RefSeq" id="XP_013963726.1">
    <property type="nucleotide sequence ID" value="XM_014108251.1"/>
</dbReference>
<dbReference type="RefSeq" id="XP_013963727.1">
    <property type="nucleotide sequence ID" value="XM_014108252.1"/>
</dbReference>
<dbReference type="RefSeq" id="XP_038293677.1">
    <property type="nucleotide sequence ID" value="XM_038437749.1"/>
</dbReference>
<dbReference type="RefSeq" id="XP_038293678.1">
    <property type="nucleotide sequence ID" value="XM_038437750.1"/>
</dbReference>
<dbReference type="RefSeq" id="XP_038293679.1">
    <property type="nucleotide sequence ID" value="XM_038437751.1"/>
</dbReference>
<dbReference type="RefSeq" id="XP_038293680.1">
    <property type="nucleotide sequence ID" value="XM_038437752.1"/>
</dbReference>
<dbReference type="RefSeq" id="XP_038293681.1">
    <property type="nucleotide sequence ID" value="XM_038437753.1"/>
</dbReference>
<dbReference type="RefSeq" id="XP_038293682.1">
    <property type="nucleotide sequence ID" value="XM_038437754.1"/>
</dbReference>
<dbReference type="RefSeq" id="XP_038293683.1">
    <property type="nucleotide sequence ID" value="XM_038437755.1"/>
</dbReference>
<dbReference type="RefSeq" id="XP_038293684.1">
    <property type="nucleotide sequence ID" value="XM_038437756.1"/>
</dbReference>
<dbReference type="RefSeq" id="XP_038293685.1">
    <property type="nucleotide sequence ID" value="XM_038437757.1"/>
</dbReference>
<dbReference type="SMR" id="P27799"/>
<dbReference type="FunCoup" id="P27799">
    <property type="interactions" value="34"/>
</dbReference>
<dbReference type="MINT" id="P27799"/>
<dbReference type="STRING" id="9615.ENSCAFP00000023174"/>
<dbReference type="GlyCosmos" id="P27799">
    <property type="glycosylation" value="2 sites, No reported glycans"/>
</dbReference>
<dbReference type="iPTMnet" id="P27799"/>
<dbReference type="PaxDb" id="9612-ENSCAFP00000023174"/>
<dbReference type="Ensembl" id="ENSCAFT00000024973.5">
    <property type="protein sequence ID" value="ENSCAFP00000023174.3"/>
    <property type="gene ID" value="ENSCAFG00000015756.5"/>
</dbReference>
<dbReference type="Ensembl" id="ENSCAFT00040046662.1">
    <property type="protein sequence ID" value="ENSCAFP00040040723.1"/>
    <property type="gene ID" value="ENSCAFG00040024982.1"/>
</dbReference>
<dbReference type="Ensembl" id="ENSCAFT00845047370.1">
    <property type="protein sequence ID" value="ENSCAFP00845037173.1"/>
    <property type="gene ID" value="ENSCAFG00845026822.1"/>
</dbReference>
<dbReference type="GeneID" id="404013"/>
<dbReference type="KEGG" id="cfa:404013"/>
<dbReference type="CTD" id="6539"/>
<dbReference type="VEuPathDB" id="HostDB:ENSCAFG00845026822"/>
<dbReference type="VGNC" id="VGNC:46455">
    <property type="gene designation" value="SLC6A12"/>
</dbReference>
<dbReference type="eggNOG" id="KOG3660">
    <property type="taxonomic scope" value="Eukaryota"/>
</dbReference>
<dbReference type="GeneTree" id="ENSGT00940000161075"/>
<dbReference type="HOGENOM" id="CLU_006855_9_5_1"/>
<dbReference type="InParanoid" id="P27799"/>
<dbReference type="OMA" id="EVVCIGW"/>
<dbReference type="OrthoDB" id="6581954at2759"/>
<dbReference type="TreeFam" id="TF343812"/>
<dbReference type="Reactome" id="R-CFA-352230">
    <property type="pathway name" value="Amino acid transport across the plasma membrane"/>
</dbReference>
<dbReference type="Reactome" id="R-CFA-442660">
    <property type="pathway name" value="Na+/Cl- dependent neurotransmitter transporters"/>
</dbReference>
<dbReference type="Reactome" id="R-CFA-71288">
    <property type="pathway name" value="Creatine metabolism"/>
</dbReference>
<dbReference type="Reactome" id="R-CFA-888593">
    <property type="pathway name" value="Reuptake of GABA"/>
</dbReference>
<dbReference type="Proteomes" id="UP000002254">
    <property type="component" value="Chromosome 27"/>
</dbReference>
<dbReference type="Proteomes" id="UP000694429">
    <property type="component" value="Unplaced"/>
</dbReference>
<dbReference type="Proteomes" id="UP000694542">
    <property type="component" value="Chromosome 27"/>
</dbReference>
<dbReference type="Proteomes" id="UP000805418">
    <property type="component" value="Chromosome 27"/>
</dbReference>
<dbReference type="Bgee" id="ENSCAFG00000015756">
    <property type="expression patterns" value="Expressed in renal medulla and 44 other cell types or tissues"/>
</dbReference>
<dbReference type="GO" id="GO:0016323">
    <property type="term" value="C:basolateral plasma membrane"/>
    <property type="evidence" value="ECO:0000250"/>
    <property type="project" value="UniProtKB"/>
</dbReference>
<dbReference type="GO" id="GO:0042995">
    <property type="term" value="C:cell projection"/>
    <property type="evidence" value="ECO:0000318"/>
    <property type="project" value="GO_Central"/>
</dbReference>
<dbReference type="GO" id="GO:0005886">
    <property type="term" value="C:plasma membrane"/>
    <property type="evidence" value="ECO:0000250"/>
    <property type="project" value="UniProtKB"/>
</dbReference>
<dbReference type="GO" id="GO:0005332">
    <property type="term" value="F:gamma-aminobutyric acid:sodium:chloride symporter activity"/>
    <property type="evidence" value="ECO:0000314"/>
    <property type="project" value="UniProtKB"/>
</dbReference>
<dbReference type="GO" id="GO:0006865">
    <property type="term" value="P:amino acid transport"/>
    <property type="evidence" value="ECO:0000318"/>
    <property type="project" value="GO_Central"/>
</dbReference>
<dbReference type="GO" id="GO:0015812">
    <property type="term" value="P:gamma-aminobutyric acid transport"/>
    <property type="evidence" value="ECO:0000314"/>
    <property type="project" value="UniProtKB"/>
</dbReference>
<dbReference type="GO" id="GO:0031460">
    <property type="term" value="P:glycine betaine transport"/>
    <property type="evidence" value="ECO:0000314"/>
    <property type="project" value="UniProtKB"/>
</dbReference>
<dbReference type="GO" id="GO:0006836">
    <property type="term" value="P:neurotransmitter transport"/>
    <property type="evidence" value="ECO:0007669"/>
    <property type="project" value="UniProtKB-KW"/>
</dbReference>
<dbReference type="GO" id="GO:0035725">
    <property type="term" value="P:sodium ion transmembrane transport"/>
    <property type="evidence" value="ECO:0000318"/>
    <property type="project" value="GO_Central"/>
</dbReference>
<dbReference type="InterPro" id="IPR000175">
    <property type="entry name" value="Na/ntran_symport"/>
</dbReference>
<dbReference type="InterPro" id="IPR002983">
    <property type="entry name" value="Na/ntran_symport_betaine"/>
</dbReference>
<dbReference type="InterPro" id="IPR037272">
    <property type="entry name" value="SNS_sf"/>
</dbReference>
<dbReference type="PANTHER" id="PTHR11616:SF118">
    <property type="entry name" value="SODIUM- AND CHLORIDE-DEPENDENT BETAINE TRANSPORTER"/>
    <property type="match status" value="1"/>
</dbReference>
<dbReference type="PANTHER" id="PTHR11616">
    <property type="entry name" value="SODIUM/CHLORIDE DEPENDENT TRANSPORTER"/>
    <property type="match status" value="1"/>
</dbReference>
<dbReference type="Pfam" id="PF00209">
    <property type="entry name" value="SNF"/>
    <property type="match status" value="1"/>
</dbReference>
<dbReference type="PRINTS" id="PR01198">
    <property type="entry name" value="BETTRANSPORT"/>
</dbReference>
<dbReference type="PRINTS" id="PR00176">
    <property type="entry name" value="NANEUSMPORT"/>
</dbReference>
<dbReference type="SUPFAM" id="SSF161070">
    <property type="entry name" value="SNF-like"/>
    <property type="match status" value="1"/>
</dbReference>
<dbReference type="PROSITE" id="PS00610">
    <property type="entry name" value="NA_NEUROTRAN_SYMP_1"/>
    <property type="match status" value="1"/>
</dbReference>
<dbReference type="PROSITE" id="PS00754">
    <property type="entry name" value="NA_NEUROTRAN_SYMP_2"/>
    <property type="match status" value="1"/>
</dbReference>
<dbReference type="PROSITE" id="PS50267">
    <property type="entry name" value="NA_NEUROTRAN_SYMP_3"/>
    <property type="match status" value="1"/>
</dbReference>